<protein>
    <recommendedName>
        <fullName evidence="1">Thiazole synthase</fullName>
        <ecNumber evidence="1">2.8.1.10</ecNumber>
    </recommendedName>
</protein>
<gene>
    <name evidence="1" type="primary">thiG</name>
    <name type="ordered locus">BBta_6224</name>
</gene>
<reference key="1">
    <citation type="journal article" date="2007" name="Science">
        <title>Legumes symbioses: absence of nod genes in photosynthetic bradyrhizobia.</title>
        <authorList>
            <person name="Giraud E."/>
            <person name="Moulin L."/>
            <person name="Vallenet D."/>
            <person name="Barbe V."/>
            <person name="Cytryn E."/>
            <person name="Avarre J.-C."/>
            <person name="Jaubert M."/>
            <person name="Simon D."/>
            <person name="Cartieaux F."/>
            <person name="Prin Y."/>
            <person name="Bena G."/>
            <person name="Hannibal L."/>
            <person name="Fardoux J."/>
            <person name="Kojadinovic M."/>
            <person name="Vuillet L."/>
            <person name="Lajus A."/>
            <person name="Cruveiller S."/>
            <person name="Rouy Z."/>
            <person name="Mangenot S."/>
            <person name="Segurens B."/>
            <person name="Dossat C."/>
            <person name="Franck W.L."/>
            <person name="Chang W.-S."/>
            <person name="Saunders E."/>
            <person name="Bruce D."/>
            <person name="Richardson P."/>
            <person name="Normand P."/>
            <person name="Dreyfus B."/>
            <person name="Pignol D."/>
            <person name="Stacey G."/>
            <person name="Emerich D."/>
            <person name="Vermeglio A."/>
            <person name="Medigue C."/>
            <person name="Sadowsky M."/>
        </authorList>
    </citation>
    <scope>NUCLEOTIDE SEQUENCE [LARGE SCALE GENOMIC DNA]</scope>
    <source>
        <strain>BTAi1 / ATCC BAA-1182</strain>
    </source>
</reference>
<organism>
    <name type="scientific">Bradyrhizobium sp. (strain BTAi1 / ATCC BAA-1182)</name>
    <dbReference type="NCBI Taxonomy" id="288000"/>
    <lineage>
        <taxon>Bacteria</taxon>
        <taxon>Pseudomonadati</taxon>
        <taxon>Pseudomonadota</taxon>
        <taxon>Alphaproteobacteria</taxon>
        <taxon>Hyphomicrobiales</taxon>
        <taxon>Nitrobacteraceae</taxon>
        <taxon>Bradyrhizobium</taxon>
    </lineage>
</organism>
<name>THIG_BRASB</name>
<proteinExistence type="inferred from homology"/>
<sequence>MPTFYDKTFTSRLLIGTALYPSPAIMQDAIRASGAEIVTVSLRREAAGGKSGDAFWKLIRELNVTVLPNTAGCRSVREAVTTAKLARELFGTSWIKLEVIADNDTLQPDVVGLVEAATILIKDGFEVFPYCTEDLSVATRLVDAGCKVVMPWAAPIGSAKGIINRDALKLLRDRLPDITLVVDAGLGAPSHAAEALELGYDAVLLNTAVAKAADPVAMARAFRLGCDAGRTAYEAGLMDARDFASPSTPVVGTPFWHAVS</sequence>
<comment type="function">
    <text evidence="1">Catalyzes the rearrangement of 1-deoxy-D-xylulose 5-phosphate (DXP) to produce the thiazole phosphate moiety of thiamine. Sulfur is provided by the thiocarboxylate moiety of the carrier protein ThiS. In vitro, sulfur can be provided by H(2)S.</text>
</comment>
<comment type="catalytic activity">
    <reaction evidence="1">
        <text>[ThiS sulfur-carrier protein]-C-terminal-Gly-aminoethanethioate + 2-iminoacetate + 1-deoxy-D-xylulose 5-phosphate = [ThiS sulfur-carrier protein]-C-terminal Gly-Gly + 2-[(2R,5Z)-2-carboxy-4-methylthiazol-5(2H)-ylidene]ethyl phosphate + 2 H2O + H(+)</text>
        <dbReference type="Rhea" id="RHEA:26297"/>
        <dbReference type="Rhea" id="RHEA-COMP:12909"/>
        <dbReference type="Rhea" id="RHEA-COMP:19908"/>
        <dbReference type="ChEBI" id="CHEBI:15377"/>
        <dbReference type="ChEBI" id="CHEBI:15378"/>
        <dbReference type="ChEBI" id="CHEBI:57792"/>
        <dbReference type="ChEBI" id="CHEBI:62899"/>
        <dbReference type="ChEBI" id="CHEBI:77846"/>
        <dbReference type="ChEBI" id="CHEBI:90778"/>
        <dbReference type="ChEBI" id="CHEBI:232372"/>
        <dbReference type="EC" id="2.8.1.10"/>
    </reaction>
</comment>
<comment type="pathway">
    <text evidence="1">Cofactor biosynthesis; thiamine diphosphate biosynthesis.</text>
</comment>
<comment type="subunit">
    <text evidence="1">Homotetramer. Forms heterodimers with either ThiH or ThiS.</text>
</comment>
<comment type="subcellular location">
    <subcellularLocation>
        <location evidence="1">Cytoplasm</location>
    </subcellularLocation>
</comment>
<comment type="similarity">
    <text evidence="1">Belongs to the ThiG family.</text>
</comment>
<accession>A5EPQ3</accession>
<keyword id="KW-0963">Cytoplasm</keyword>
<keyword id="KW-1185">Reference proteome</keyword>
<keyword id="KW-0704">Schiff base</keyword>
<keyword id="KW-0784">Thiamine biosynthesis</keyword>
<keyword id="KW-0808">Transferase</keyword>
<evidence type="ECO:0000255" key="1">
    <source>
        <dbReference type="HAMAP-Rule" id="MF_00443"/>
    </source>
</evidence>
<dbReference type="EC" id="2.8.1.10" evidence="1"/>
<dbReference type="EMBL" id="CP000494">
    <property type="protein sequence ID" value="ABQ38147.1"/>
    <property type="molecule type" value="Genomic_DNA"/>
</dbReference>
<dbReference type="RefSeq" id="WP_012046096.1">
    <property type="nucleotide sequence ID" value="NC_009485.1"/>
</dbReference>
<dbReference type="SMR" id="A5EPQ3"/>
<dbReference type="STRING" id="288000.BBta_6224"/>
<dbReference type="KEGG" id="bbt:BBta_6224"/>
<dbReference type="eggNOG" id="COG2022">
    <property type="taxonomic scope" value="Bacteria"/>
</dbReference>
<dbReference type="HOGENOM" id="CLU_062233_1_0_5"/>
<dbReference type="OrthoDB" id="9805935at2"/>
<dbReference type="UniPathway" id="UPA00060"/>
<dbReference type="Proteomes" id="UP000000246">
    <property type="component" value="Chromosome"/>
</dbReference>
<dbReference type="GO" id="GO:0005737">
    <property type="term" value="C:cytoplasm"/>
    <property type="evidence" value="ECO:0007669"/>
    <property type="project" value="UniProtKB-SubCell"/>
</dbReference>
<dbReference type="GO" id="GO:1990107">
    <property type="term" value="F:thiazole synthase activity"/>
    <property type="evidence" value="ECO:0007669"/>
    <property type="project" value="UniProtKB-EC"/>
</dbReference>
<dbReference type="GO" id="GO:0009229">
    <property type="term" value="P:thiamine diphosphate biosynthetic process"/>
    <property type="evidence" value="ECO:0007669"/>
    <property type="project" value="UniProtKB-UniRule"/>
</dbReference>
<dbReference type="CDD" id="cd04728">
    <property type="entry name" value="ThiG"/>
    <property type="match status" value="1"/>
</dbReference>
<dbReference type="Gene3D" id="3.20.20.70">
    <property type="entry name" value="Aldolase class I"/>
    <property type="match status" value="1"/>
</dbReference>
<dbReference type="HAMAP" id="MF_00443">
    <property type="entry name" value="ThiG"/>
    <property type="match status" value="1"/>
</dbReference>
<dbReference type="InterPro" id="IPR013785">
    <property type="entry name" value="Aldolase_TIM"/>
</dbReference>
<dbReference type="InterPro" id="IPR033983">
    <property type="entry name" value="Thiazole_synthase_ThiG"/>
</dbReference>
<dbReference type="InterPro" id="IPR008867">
    <property type="entry name" value="ThiG"/>
</dbReference>
<dbReference type="PANTHER" id="PTHR34266">
    <property type="entry name" value="THIAZOLE SYNTHASE"/>
    <property type="match status" value="1"/>
</dbReference>
<dbReference type="PANTHER" id="PTHR34266:SF2">
    <property type="entry name" value="THIAZOLE SYNTHASE"/>
    <property type="match status" value="1"/>
</dbReference>
<dbReference type="Pfam" id="PF05690">
    <property type="entry name" value="ThiG"/>
    <property type="match status" value="1"/>
</dbReference>
<dbReference type="SUPFAM" id="SSF110399">
    <property type="entry name" value="ThiG-like"/>
    <property type="match status" value="1"/>
</dbReference>
<feature type="chain" id="PRO_1000025996" description="Thiazole synthase">
    <location>
        <begin position="1"/>
        <end position="260"/>
    </location>
</feature>
<feature type="active site" description="Schiff-base intermediate with DXP" evidence="1">
    <location>
        <position position="96"/>
    </location>
</feature>
<feature type="binding site" evidence="1">
    <location>
        <position position="157"/>
    </location>
    <ligand>
        <name>1-deoxy-D-xylulose 5-phosphate</name>
        <dbReference type="ChEBI" id="CHEBI:57792"/>
    </ligand>
</feature>
<feature type="binding site" evidence="1">
    <location>
        <begin position="184"/>
        <end position="185"/>
    </location>
    <ligand>
        <name>1-deoxy-D-xylulose 5-phosphate</name>
        <dbReference type="ChEBI" id="CHEBI:57792"/>
    </ligand>
</feature>
<feature type="binding site" evidence="1">
    <location>
        <begin position="206"/>
        <end position="207"/>
    </location>
    <ligand>
        <name>1-deoxy-D-xylulose 5-phosphate</name>
        <dbReference type="ChEBI" id="CHEBI:57792"/>
    </ligand>
</feature>